<accession>O62026</accession>
<proteinExistence type="evidence at transcript level"/>
<evidence type="ECO:0000250" key="1">
    <source>
        <dbReference type="UniProtKB" id="Q19187"/>
    </source>
</evidence>
<evidence type="ECO:0000255" key="2"/>
<evidence type="ECO:0000255" key="3">
    <source>
        <dbReference type="PROSITE-ProRule" id="PRU00099"/>
    </source>
</evidence>
<evidence type="ECO:0000255" key="4">
    <source>
        <dbReference type="PROSITE-ProRule" id="PRU00159"/>
    </source>
</evidence>
<evidence type="ECO:0000255" key="5">
    <source>
        <dbReference type="PROSITE-ProRule" id="PRU00498"/>
    </source>
</evidence>
<evidence type="ECO:0000269" key="6">
    <source>
    </source>
</evidence>
<evidence type="ECO:0000305" key="7"/>
<evidence type="ECO:0000312" key="8">
    <source>
        <dbReference type="Proteomes" id="UP000001940"/>
    </source>
</evidence>
<evidence type="ECO:0000312" key="9">
    <source>
        <dbReference type="WormBase" id="C04H5.3"/>
    </source>
</evidence>
<feature type="signal peptide" evidence="2">
    <location>
        <begin position="1"/>
        <end position="23"/>
    </location>
</feature>
<feature type="chain" id="PRO_0000433296" description="Receptor-type guanylate cyclase gcy-29" evidence="7">
    <location>
        <begin position="24"/>
        <end position="1069"/>
    </location>
</feature>
<feature type="topological domain" description="Extracellular" evidence="2">
    <location>
        <begin position="24"/>
        <end position="458"/>
    </location>
</feature>
<feature type="transmembrane region" description="Helical" evidence="2">
    <location>
        <begin position="459"/>
        <end position="479"/>
    </location>
</feature>
<feature type="topological domain" description="Cytoplasmic" evidence="2">
    <location>
        <begin position="480"/>
        <end position="1069"/>
    </location>
</feature>
<feature type="domain" description="Protein kinase" evidence="4">
    <location>
        <begin position="497"/>
        <end position="806"/>
    </location>
</feature>
<feature type="domain" description="Guanylate cyclase" evidence="3">
    <location>
        <begin position="876"/>
        <end position="1006"/>
    </location>
</feature>
<feature type="binding site" evidence="4">
    <location>
        <begin position="503"/>
        <end position="511"/>
    </location>
    <ligand>
        <name>ATP</name>
        <dbReference type="ChEBI" id="CHEBI:30616"/>
    </ligand>
</feature>
<feature type="binding site" evidence="4">
    <location>
        <position position="527"/>
    </location>
    <ligand>
        <name>ATP</name>
        <dbReference type="ChEBI" id="CHEBI:30616"/>
    </ligand>
</feature>
<feature type="binding site" evidence="3">
    <location>
        <position position="881"/>
    </location>
    <ligand>
        <name>Mg(2+)</name>
        <dbReference type="ChEBI" id="CHEBI:18420"/>
        <label>1</label>
    </ligand>
</feature>
<feature type="binding site" evidence="3">
    <location>
        <position position="881"/>
    </location>
    <ligand>
        <name>Mg(2+)</name>
        <dbReference type="ChEBI" id="CHEBI:18420"/>
        <label>2</label>
    </ligand>
</feature>
<feature type="binding site" evidence="3">
    <location>
        <position position="882"/>
    </location>
    <ligand>
        <name>Mg(2+)</name>
        <dbReference type="ChEBI" id="CHEBI:18420"/>
        <label>2</label>
    </ligand>
</feature>
<feature type="binding site" evidence="3">
    <location>
        <position position="925"/>
    </location>
    <ligand>
        <name>Mg(2+)</name>
        <dbReference type="ChEBI" id="CHEBI:18420"/>
        <label>1</label>
    </ligand>
</feature>
<feature type="binding site" evidence="3">
    <location>
        <position position="925"/>
    </location>
    <ligand>
        <name>Mg(2+)</name>
        <dbReference type="ChEBI" id="CHEBI:18420"/>
        <label>2</label>
    </ligand>
</feature>
<feature type="glycosylation site" description="N-linked (GlcNAc...) asparagine" evidence="5">
    <location>
        <position position="161"/>
    </location>
</feature>
<feature type="glycosylation site" description="N-linked (GlcNAc...) asparagine" evidence="5">
    <location>
        <position position="240"/>
    </location>
</feature>
<feature type="glycosylation site" description="N-linked (GlcNAc...) asparagine" evidence="5">
    <location>
        <position position="407"/>
    </location>
</feature>
<dbReference type="EC" id="4.6.1.2" evidence="1"/>
<dbReference type="EMBL" id="BX284602">
    <property type="protein sequence ID" value="CAB03842.3"/>
    <property type="molecule type" value="Genomic_DNA"/>
</dbReference>
<dbReference type="PIR" id="T18931">
    <property type="entry name" value="T18931"/>
</dbReference>
<dbReference type="PIR" id="T18933">
    <property type="entry name" value="T18933"/>
</dbReference>
<dbReference type="RefSeq" id="NP_001364597.1">
    <property type="nucleotide sequence ID" value="NM_001377902.1"/>
</dbReference>
<dbReference type="RefSeq" id="NP_497026.2">
    <property type="nucleotide sequence ID" value="NM_064625.4"/>
</dbReference>
<dbReference type="SMR" id="O62026"/>
<dbReference type="FunCoup" id="O62026">
    <property type="interactions" value="101"/>
</dbReference>
<dbReference type="STRING" id="6239.C04H5.3.1"/>
<dbReference type="GlyCosmos" id="O62026">
    <property type="glycosylation" value="3 sites, No reported glycans"/>
</dbReference>
<dbReference type="PaxDb" id="6239-C04H5.3"/>
<dbReference type="EnsemblMetazoa" id="C04H5.3.1">
    <property type="protein sequence ID" value="C04H5.3.1"/>
    <property type="gene ID" value="WBGene00007314"/>
</dbReference>
<dbReference type="GeneID" id="175116"/>
<dbReference type="UCSC" id="C04H5.3">
    <property type="organism name" value="c. elegans"/>
</dbReference>
<dbReference type="AGR" id="WB:WBGene00007314"/>
<dbReference type="WormBase" id="C04H5.3">
    <property type="protein sequence ID" value="CE53989"/>
    <property type="gene ID" value="WBGene00007314"/>
    <property type="gene designation" value="gcy-29"/>
</dbReference>
<dbReference type="eggNOG" id="KOG1023">
    <property type="taxonomic scope" value="Eukaryota"/>
</dbReference>
<dbReference type="HOGENOM" id="CLU_001072_1_3_1"/>
<dbReference type="InParanoid" id="O62026"/>
<dbReference type="OrthoDB" id="60033at2759"/>
<dbReference type="PhylomeDB" id="O62026"/>
<dbReference type="Reactome" id="R-CEL-2514859">
    <property type="pathway name" value="Inactivation, recovery and regulation of the phototransduction cascade"/>
</dbReference>
<dbReference type="PRO" id="PR:O62026"/>
<dbReference type="Proteomes" id="UP000001940">
    <property type="component" value="Chromosome II"/>
</dbReference>
<dbReference type="Bgee" id="WBGene00007314">
    <property type="expression patterns" value="Expressed in larva"/>
</dbReference>
<dbReference type="GO" id="GO:0005886">
    <property type="term" value="C:plasma membrane"/>
    <property type="evidence" value="ECO:0000318"/>
    <property type="project" value="GO_Central"/>
</dbReference>
<dbReference type="GO" id="GO:0005524">
    <property type="term" value="F:ATP binding"/>
    <property type="evidence" value="ECO:0007669"/>
    <property type="project" value="UniProtKB-KW"/>
</dbReference>
<dbReference type="GO" id="GO:0005525">
    <property type="term" value="F:GTP binding"/>
    <property type="evidence" value="ECO:0007669"/>
    <property type="project" value="UniProtKB-KW"/>
</dbReference>
<dbReference type="GO" id="GO:0004383">
    <property type="term" value="F:guanylate cyclase activity"/>
    <property type="evidence" value="ECO:0000318"/>
    <property type="project" value="GO_Central"/>
</dbReference>
<dbReference type="GO" id="GO:0046872">
    <property type="term" value="F:metal ion binding"/>
    <property type="evidence" value="ECO:0007669"/>
    <property type="project" value="UniProtKB-KW"/>
</dbReference>
<dbReference type="GO" id="GO:0001653">
    <property type="term" value="F:peptide receptor activity"/>
    <property type="evidence" value="ECO:0000318"/>
    <property type="project" value="GO_Central"/>
</dbReference>
<dbReference type="GO" id="GO:0004672">
    <property type="term" value="F:protein kinase activity"/>
    <property type="evidence" value="ECO:0007669"/>
    <property type="project" value="InterPro"/>
</dbReference>
<dbReference type="GO" id="GO:0006182">
    <property type="term" value="P:cGMP biosynthetic process"/>
    <property type="evidence" value="ECO:0000318"/>
    <property type="project" value="GO_Central"/>
</dbReference>
<dbReference type="GO" id="GO:0035556">
    <property type="term" value="P:intracellular signal transduction"/>
    <property type="evidence" value="ECO:0007669"/>
    <property type="project" value="InterPro"/>
</dbReference>
<dbReference type="GO" id="GO:0007168">
    <property type="term" value="P:receptor guanylyl cyclase signaling pathway"/>
    <property type="evidence" value="ECO:0000318"/>
    <property type="project" value="GO_Central"/>
</dbReference>
<dbReference type="CDD" id="cd07302">
    <property type="entry name" value="CHD"/>
    <property type="match status" value="1"/>
</dbReference>
<dbReference type="CDD" id="cd06352">
    <property type="entry name" value="PBP1_NPR_GC-like"/>
    <property type="match status" value="1"/>
</dbReference>
<dbReference type="FunFam" id="1.10.510.10:FF:000941">
    <property type="entry name" value="Guanylate cyclase"/>
    <property type="match status" value="1"/>
</dbReference>
<dbReference type="FunFam" id="3.30.70.1230:FF:000035">
    <property type="entry name" value="Guanylate cyclase"/>
    <property type="match status" value="1"/>
</dbReference>
<dbReference type="Gene3D" id="3.40.50.2300">
    <property type="match status" value="2"/>
</dbReference>
<dbReference type="Gene3D" id="3.30.70.1230">
    <property type="entry name" value="Nucleotide cyclase"/>
    <property type="match status" value="1"/>
</dbReference>
<dbReference type="Gene3D" id="1.10.510.10">
    <property type="entry name" value="Transferase(Phosphotransferase) domain 1"/>
    <property type="match status" value="1"/>
</dbReference>
<dbReference type="InterPro" id="IPR001054">
    <property type="entry name" value="A/G_cyclase"/>
</dbReference>
<dbReference type="InterPro" id="IPR001828">
    <property type="entry name" value="ANF_lig-bd_rcpt"/>
</dbReference>
<dbReference type="InterPro" id="IPR050401">
    <property type="entry name" value="Cyclic_nucleotide_synthase"/>
</dbReference>
<dbReference type="InterPro" id="IPR011009">
    <property type="entry name" value="Kinase-like_dom_sf"/>
</dbReference>
<dbReference type="InterPro" id="IPR029787">
    <property type="entry name" value="Nucleotide_cyclase"/>
</dbReference>
<dbReference type="InterPro" id="IPR028082">
    <property type="entry name" value="Peripla_BP_I"/>
</dbReference>
<dbReference type="InterPro" id="IPR000719">
    <property type="entry name" value="Prot_kinase_dom"/>
</dbReference>
<dbReference type="InterPro" id="IPR001245">
    <property type="entry name" value="Ser-Thr/Tyr_kinase_cat_dom"/>
</dbReference>
<dbReference type="PANTHER" id="PTHR11920">
    <property type="entry name" value="GUANYLYL CYCLASE"/>
    <property type="match status" value="1"/>
</dbReference>
<dbReference type="PANTHER" id="PTHR11920:SF342">
    <property type="entry name" value="RECEPTOR-TYPE GUANYLATE CYCLASE GCY-29"/>
    <property type="match status" value="1"/>
</dbReference>
<dbReference type="Pfam" id="PF01094">
    <property type="entry name" value="ANF_receptor"/>
    <property type="match status" value="1"/>
</dbReference>
<dbReference type="Pfam" id="PF00211">
    <property type="entry name" value="Guanylate_cyc"/>
    <property type="match status" value="1"/>
</dbReference>
<dbReference type="Pfam" id="PF07714">
    <property type="entry name" value="PK_Tyr_Ser-Thr"/>
    <property type="match status" value="1"/>
</dbReference>
<dbReference type="SMART" id="SM00044">
    <property type="entry name" value="CYCc"/>
    <property type="match status" value="1"/>
</dbReference>
<dbReference type="SUPFAM" id="SSF55073">
    <property type="entry name" value="Nucleotide cyclase"/>
    <property type="match status" value="1"/>
</dbReference>
<dbReference type="SUPFAM" id="SSF53822">
    <property type="entry name" value="Periplasmic binding protein-like I"/>
    <property type="match status" value="1"/>
</dbReference>
<dbReference type="SUPFAM" id="SSF56112">
    <property type="entry name" value="Protein kinase-like (PK-like)"/>
    <property type="match status" value="1"/>
</dbReference>
<dbReference type="PROSITE" id="PS50125">
    <property type="entry name" value="GUANYLATE_CYCLASE_2"/>
    <property type="match status" value="1"/>
</dbReference>
<dbReference type="PROSITE" id="PS50011">
    <property type="entry name" value="PROTEIN_KINASE_DOM"/>
    <property type="match status" value="1"/>
</dbReference>
<comment type="function">
    <text evidence="1">Guanylate cyclase involved in the production of the second messenger cGMP (By similarity).</text>
</comment>
<comment type="catalytic activity">
    <reaction evidence="1">
        <text>GTP = 3',5'-cyclic GMP + diphosphate</text>
        <dbReference type="Rhea" id="RHEA:13665"/>
        <dbReference type="ChEBI" id="CHEBI:33019"/>
        <dbReference type="ChEBI" id="CHEBI:37565"/>
        <dbReference type="ChEBI" id="CHEBI:57746"/>
        <dbReference type="EC" id="4.6.1.2"/>
    </reaction>
</comment>
<comment type="subcellular location">
    <subcellularLocation>
        <location evidence="7">Cell membrane</location>
        <topology evidence="7">Single-pass type I membrane protein</topology>
    </subcellularLocation>
</comment>
<comment type="tissue specificity">
    <text evidence="6">Expressed bilaterally in ASE and AFD sensory neurons.</text>
</comment>
<comment type="domain">
    <text evidence="4">The protein kinase domain is predicted to be catalytically inactive.</text>
</comment>
<comment type="similarity">
    <text evidence="3">Belongs to the adenylyl cyclase class-4/guanylyl cyclase family.</text>
</comment>
<gene>
    <name evidence="9" type="primary">gcy-29</name>
    <name evidence="9" type="ORF">C04H5.3</name>
</gene>
<keyword id="KW-0067">ATP-binding</keyword>
<keyword id="KW-1003">Cell membrane</keyword>
<keyword id="KW-0141">cGMP biosynthesis</keyword>
<keyword id="KW-0325">Glycoprotein</keyword>
<keyword id="KW-0342">GTP-binding</keyword>
<keyword id="KW-0456">Lyase</keyword>
<keyword id="KW-0460">Magnesium</keyword>
<keyword id="KW-0472">Membrane</keyword>
<keyword id="KW-0479">Metal-binding</keyword>
<keyword id="KW-0547">Nucleotide-binding</keyword>
<keyword id="KW-0675">Receptor</keyword>
<keyword id="KW-1185">Reference proteome</keyword>
<keyword id="KW-0732">Signal</keyword>
<keyword id="KW-0812">Transmembrane</keyword>
<keyword id="KW-1133">Transmembrane helix</keyword>
<reference evidence="8" key="1">
    <citation type="journal article" date="1998" name="Science">
        <title>Genome sequence of the nematode C. elegans: a platform for investigating biology.</title>
        <authorList>
            <consortium name="The C. elegans sequencing consortium"/>
        </authorList>
    </citation>
    <scope>NUCLEOTIDE SEQUENCE [LARGE SCALE GENOMIC DNA]</scope>
    <source>
        <strain evidence="8">Bristol N2</strain>
    </source>
</reference>
<reference evidence="7" key="2">
    <citation type="journal article" date="2006" name="Genetics">
        <title>Searching for neuronal left/right asymmetry: genomewide analysis of nematode receptor-type guanylyl cyclases.</title>
        <authorList>
            <person name="Ortiz C.O."/>
            <person name="Etchberger J.F."/>
            <person name="Posy S.L."/>
            <person name="Frokjaer-Jensen C."/>
            <person name="Lockery S."/>
            <person name="Honig B."/>
            <person name="Hobert O."/>
        </authorList>
    </citation>
    <scope>TISSUE SPECIFICITY</scope>
</reference>
<sequence>MLPNFWNFQFIFVIFCWIPIVVSDEKIVLKIGSISSRDNAKMLESILEMAKKKMTEQGVLGEKLDIQIITVEGCGASFEGVAAAAELYHVQKVDAYFGPYCSKELSPVATMASYWNIPIFAYTATSAEFANTKVYKTLLRTSFQSLNSISEATAAFMAHHNITKAAIVANIGTDSFEKIQSLEKALRSRGITVARRVMFEEAASAQDLVDNGYMNELRDNARVILPIFSSTRDLSTVFRNATWLANMASPEFIYINPLIVARNSEEPPVFYGKMAQKSIKAENPNTIQIYNSYGFSDDLLNEFLAIFDQNQRIYIDEKDLFNYVALYESFCVFAKLTEKYLHSLKEKPEDGKIRIDGKALWNMAVGMTFQGVLDNVIFDNGAERMTSFSAFYVDEKRDQIRTVSLINSTVTSKNCMDPVCIELVVSDVVTKFWSSPSGKLPDSEPECGFREENCDYTQTIVIATAVVCIILTVFLGIWLRRACETSALDKMPWRVFRDDVQILDEEQVKSVVSLNSASTKMSQVETKLIKNHAIVGVNTHAVYDLYEQRQNIRFTREDLILLTKMKQAVHDNINPFIGVSFNEKSELLLLWKFCSRGTLQDVIYCEKFAMDEKFQGAFVRDITMGLEYLHSSPIGYHGGLACWSVLIDKNWMLKLTDYAVCDPLKRWEKHGRINCKVDNEAEKQWQKMASLYVPPEIRTANEKNRLKRMDQKWQGQTILKRQQSDIYAFGVIIYEILFRSLPYDEKVDLTELAQKAAEGDKIQKPSIQRNKKLNPDLIALLQDCWSDQPDMRPTIRRVRLATEIALKTKGNLVDSMMRMMEEYANNLEKLVGERTKLAEEANLRAERLLFQLLPKHVAIELKAGRTVAPKMYDSATVMFSDIVGFTKLCSASTPIEVVNLLNKLYSEFDTVISKHDCYKVETIGDAYMVVSGIPIENGQRHVANISAVTLGIMDLLKVFEVPHRRDYRLTIRLGFASGQVSAAVVGLSSPRYCLFGETVNIAAVMESSGEGGRVQITETSKILLENEYPEFIIEIRGINKDVKQDDFVTYWLTGKDEDYFKKKNNTFDF</sequence>
<organism evidence="8">
    <name type="scientific">Caenorhabditis elegans</name>
    <dbReference type="NCBI Taxonomy" id="6239"/>
    <lineage>
        <taxon>Eukaryota</taxon>
        <taxon>Metazoa</taxon>
        <taxon>Ecdysozoa</taxon>
        <taxon>Nematoda</taxon>
        <taxon>Chromadorea</taxon>
        <taxon>Rhabditida</taxon>
        <taxon>Rhabditina</taxon>
        <taxon>Rhabditomorpha</taxon>
        <taxon>Rhabditoidea</taxon>
        <taxon>Rhabditidae</taxon>
        <taxon>Peloderinae</taxon>
        <taxon>Caenorhabditis</taxon>
    </lineage>
</organism>
<protein>
    <recommendedName>
        <fullName evidence="7">Receptor-type guanylate cyclase gcy-29</fullName>
        <ecNumber evidence="1">4.6.1.2</ecNumber>
    </recommendedName>
</protein>
<name>GCY29_CAEEL</name>